<dbReference type="EC" id="2.7.7.72" evidence="1"/>
<dbReference type="EMBL" id="CP000056">
    <property type="protein sequence ID" value="AAX71766.1"/>
    <property type="molecule type" value="Genomic_DNA"/>
</dbReference>
<dbReference type="RefSeq" id="WP_002990193.1">
    <property type="nucleotide sequence ID" value="NC_007296.2"/>
</dbReference>
<dbReference type="SMR" id="Q48U40"/>
<dbReference type="KEGG" id="spb:M28_Spy0653"/>
<dbReference type="HOGENOM" id="CLU_015961_3_1_9"/>
<dbReference type="GO" id="GO:0005524">
    <property type="term" value="F:ATP binding"/>
    <property type="evidence" value="ECO:0007669"/>
    <property type="project" value="UniProtKB-UniRule"/>
</dbReference>
<dbReference type="GO" id="GO:0004810">
    <property type="term" value="F:CCA tRNA nucleotidyltransferase activity"/>
    <property type="evidence" value="ECO:0007669"/>
    <property type="project" value="UniProtKB-UniRule"/>
</dbReference>
<dbReference type="GO" id="GO:0000287">
    <property type="term" value="F:magnesium ion binding"/>
    <property type="evidence" value="ECO:0007669"/>
    <property type="project" value="UniProtKB-UniRule"/>
</dbReference>
<dbReference type="GO" id="GO:0000049">
    <property type="term" value="F:tRNA binding"/>
    <property type="evidence" value="ECO:0007669"/>
    <property type="project" value="UniProtKB-UniRule"/>
</dbReference>
<dbReference type="GO" id="GO:0042245">
    <property type="term" value="P:RNA repair"/>
    <property type="evidence" value="ECO:0007669"/>
    <property type="project" value="UniProtKB-KW"/>
</dbReference>
<dbReference type="GO" id="GO:0001680">
    <property type="term" value="P:tRNA 3'-terminal CCA addition"/>
    <property type="evidence" value="ECO:0007669"/>
    <property type="project" value="UniProtKB-UniRule"/>
</dbReference>
<dbReference type="CDD" id="cd05398">
    <property type="entry name" value="NT_ClassII-CCAase"/>
    <property type="match status" value="1"/>
</dbReference>
<dbReference type="Gene3D" id="1.10.110.30">
    <property type="match status" value="1"/>
</dbReference>
<dbReference type="Gene3D" id="1.10.246.80">
    <property type="match status" value="1"/>
</dbReference>
<dbReference type="Gene3D" id="1.20.58.560">
    <property type="match status" value="1"/>
</dbReference>
<dbReference type="Gene3D" id="3.30.460.10">
    <property type="entry name" value="Beta Polymerase, domain 2"/>
    <property type="match status" value="1"/>
</dbReference>
<dbReference type="HAMAP" id="MF_01263">
    <property type="entry name" value="CCA_bact_type3"/>
    <property type="match status" value="1"/>
</dbReference>
<dbReference type="InterPro" id="IPR050264">
    <property type="entry name" value="Bact_CCA-adding_enz_type3_sf"/>
</dbReference>
<dbReference type="InterPro" id="IPR032810">
    <property type="entry name" value="CCA-adding_enz_C"/>
</dbReference>
<dbReference type="InterPro" id="IPR023068">
    <property type="entry name" value="CCA-adding_enz_firmicutes"/>
</dbReference>
<dbReference type="InterPro" id="IPR043519">
    <property type="entry name" value="NT_sf"/>
</dbReference>
<dbReference type="InterPro" id="IPR002646">
    <property type="entry name" value="PolA_pol_head_dom"/>
</dbReference>
<dbReference type="InterPro" id="IPR032828">
    <property type="entry name" value="PolyA_RNA-bd"/>
</dbReference>
<dbReference type="NCBIfam" id="NF009814">
    <property type="entry name" value="PRK13299.1"/>
    <property type="match status" value="1"/>
</dbReference>
<dbReference type="PANTHER" id="PTHR46173">
    <property type="entry name" value="CCA TRNA NUCLEOTIDYLTRANSFERASE 1, MITOCHONDRIAL"/>
    <property type="match status" value="1"/>
</dbReference>
<dbReference type="PANTHER" id="PTHR46173:SF1">
    <property type="entry name" value="CCA TRNA NUCLEOTIDYLTRANSFERASE 1, MITOCHONDRIAL"/>
    <property type="match status" value="1"/>
</dbReference>
<dbReference type="Pfam" id="PF01743">
    <property type="entry name" value="PolyA_pol"/>
    <property type="match status" value="1"/>
</dbReference>
<dbReference type="Pfam" id="PF12627">
    <property type="entry name" value="PolyA_pol_RNAbd"/>
    <property type="match status" value="1"/>
</dbReference>
<dbReference type="Pfam" id="PF13735">
    <property type="entry name" value="tRNA_NucTran2_2"/>
    <property type="match status" value="1"/>
</dbReference>
<dbReference type="SUPFAM" id="SSF81301">
    <property type="entry name" value="Nucleotidyltransferase"/>
    <property type="match status" value="1"/>
</dbReference>
<dbReference type="SUPFAM" id="SSF81891">
    <property type="entry name" value="Poly A polymerase C-terminal region-like"/>
    <property type="match status" value="1"/>
</dbReference>
<comment type="function">
    <text evidence="1">Catalyzes the addition and repair of the essential 3'-terminal CCA sequence in tRNAs without using a nucleic acid template. Adds these three nucleotides in the order of C, C, and A to the tRNA nucleotide-73, using CTP and ATP as substrates and producing inorganic pyrophosphate. tRNA 3'-terminal CCA addition is required both for tRNA processing and repair. Also involved in tRNA surveillance by mediating tandem CCA addition to generate a CCACCA at the 3' terminus of unstable tRNAs. While stable tRNAs receive only 3'-terminal CCA, unstable tRNAs are marked with CCACCA and rapidly degraded.</text>
</comment>
<comment type="catalytic activity">
    <reaction evidence="1">
        <text>a tRNA precursor + 2 CTP + ATP = a tRNA with a 3' CCA end + 3 diphosphate</text>
        <dbReference type="Rhea" id="RHEA:14433"/>
        <dbReference type="Rhea" id="RHEA-COMP:10465"/>
        <dbReference type="Rhea" id="RHEA-COMP:10468"/>
        <dbReference type="ChEBI" id="CHEBI:30616"/>
        <dbReference type="ChEBI" id="CHEBI:33019"/>
        <dbReference type="ChEBI" id="CHEBI:37563"/>
        <dbReference type="ChEBI" id="CHEBI:74896"/>
        <dbReference type="ChEBI" id="CHEBI:83071"/>
        <dbReference type="EC" id="2.7.7.72"/>
    </reaction>
</comment>
<comment type="catalytic activity">
    <reaction evidence="1">
        <text>a tRNA with a 3' CCA end + 2 CTP + ATP = a tRNA with a 3' CCACCA end + 3 diphosphate</text>
        <dbReference type="Rhea" id="RHEA:76235"/>
        <dbReference type="Rhea" id="RHEA-COMP:10468"/>
        <dbReference type="Rhea" id="RHEA-COMP:18655"/>
        <dbReference type="ChEBI" id="CHEBI:30616"/>
        <dbReference type="ChEBI" id="CHEBI:33019"/>
        <dbReference type="ChEBI" id="CHEBI:37563"/>
        <dbReference type="ChEBI" id="CHEBI:83071"/>
        <dbReference type="ChEBI" id="CHEBI:195187"/>
    </reaction>
    <physiologicalReaction direction="left-to-right" evidence="1">
        <dbReference type="Rhea" id="RHEA:76236"/>
    </physiologicalReaction>
</comment>
<comment type="cofactor">
    <cofactor evidence="1">
        <name>Mg(2+)</name>
        <dbReference type="ChEBI" id="CHEBI:18420"/>
    </cofactor>
</comment>
<comment type="subunit">
    <text evidence="1">Homodimer.</text>
</comment>
<comment type="miscellaneous">
    <text evidence="1">A single active site specifically recognizes both ATP and CTP and is responsible for their addition.</text>
</comment>
<comment type="similarity">
    <text evidence="1">Belongs to the tRNA nucleotidyltransferase/poly(A) polymerase family. Bacterial CCA-adding enzyme type 3 subfamily.</text>
</comment>
<proteinExistence type="inferred from homology"/>
<protein>
    <recommendedName>
        <fullName evidence="1">CCA-adding enzyme</fullName>
        <ecNumber evidence="1">2.7.7.72</ecNumber>
    </recommendedName>
    <alternativeName>
        <fullName evidence="1">CCA tRNA nucleotidyltransferase</fullName>
    </alternativeName>
    <alternativeName>
        <fullName evidence="1">tRNA CCA-pyrophosphorylase</fullName>
    </alternativeName>
    <alternativeName>
        <fullName evidence="1">tRNA adenylyl-/cytidylyl- transferase</fullName>
    </alternativeName>
    <alternativeName>
        <fullName evidence="1">tRNA nucleotidyltransferase</fullName>
    </alternativeName>
    <alternativeName>
        <fullName evidence="1">tRNA-NT</fullName>
    </alternativeName>
</protein>
<keyword id="KW-0067">ATP-binding</keyword>
<keyword id="KW-0460">Magnesium</keyword>
<keyword id="KW-0479">Metal-binding</keyword>
<keyword id="KW-0547">Nucleotide-binding</keyword>
<keyword id="KW-0548">Nucleotidyltransferase</keyword>
<keyword id="KW-0692">RNA repair</keyword>
<keyword id="KW-0694">RNA-binding</keyword>
<keyword id="KW-0808">Transferase</keyword>
<keyword id="KW-0819">tRNA processing</keyword>
<name>CCA_STRPM</name>
<accession>Q48U40</accession>
<organism>
    <name type="scientific">Streptococcus pyogenes serotype M28 (strain MGAS6180)</name>
    <dbReference type="NCBI Taxonomy" id="319701"/>
    <lineage>
        <taxon>Bacteria</taxon>
        <taxon>Bacillati</taxon>
        <taxon>Bacillota</taxon>
        <taxon>Bacilli</taxon>
        <taxon>Lactobacillales</taxon>
        <taxon>Streptococcaceae</taxon>
        <taxon>Streptococcus</taxon>
    </lineage>
</organism>
<reference key="1">
    <citation type="journal article" date="2005" name="J. Infect. Dis.">
        <title>Genome sequence of a serotype M28 strain of group A Streptococcus: potential new insights into puerperal sepsis and bacterial disease specificity.</title>
        <authorList>
            <person name="Green N.M."/>
            <person name="Zhang S."/>
            <person name="Porcella S.F."/>
            <person name="Nagiec M.J."/>
            <person name="Barbian K.D."/>
            <person name="Beres S.B."/>
            <person name="Lefebvre R.B."/>
            <person name="Musser J.M."/>
        </authorList>
    </citation>
    <scope>NUCLEOTIDE SEQUENCE [LARGE SCALE GENOMIC DNA]</scope>
    <source>
        <strain>MGAS6180</strain>
    </source>
</reference>
<evidence type="ECO:0000255" key="1">
    <source>
        <dbReference type="HAMAP-Rule" id="MF_01263"/>
    </source>
</evidence>
<feature type="chain" id="PRO_1000054342" description="CCA-adding enzyme">
    <location>
        <begin position="1"/>
        <end position="402"/>
    </location>
</feature>
<feature type="binding site" evidence="1">
    <location>
        <position position="32"/>
    </location>
    <ligand>
        <name>ATP</name>
        <dbReference type="ChEBI" id="CHEBI:30616"/>
    </ligand>
</feature>
<feature type="binding site" evidence="1">
    <location>
        <position position="32"/>
    </location>
    <ligand>
        <name>CTP</name>
        <dbReference type="ChEBI" id="CHEBI:37563"/>
    </ligand>
</feature>
<feature type="binding site" evidence="1">
    <location>
        <position position="35"/>
    </location>
    <ligand>
        <name>ATP</name>
        <dbReference type="ChEBI" id="CHEBI:30616"/>
    </ligand>
</feature>
<feature type="binding site" evidence="1">
    <location>
        <position position="35"/>
    </location>
    <ligand>
        <name>CTP</name>
        <dbReference type="ChEBI" id="CHEBI:37563"/>
    </ligand>
</feature>
<feature type="binding site" evidence="1">
    <location>
        <position position="45"/>
    </location>
    <ligand>
        <name>Mg(2+)</name>
        <dbReference type="ChEBI" id="CHEBI:18420"/>
    </ligand>
</feature>
<feature type="binding site" evidence="1">
    <location>
        <position position="47"/>
    </location>
    <ligand>
        <name>Mg(2+)</name>
        <dbReference type="ChEBI" id="CHEBI:18420"/>
    </ligand>
</feature>
<feature type="binding site" evidence="1">
    <location>
        <position position="116"/>
    </location>
    <ligand>
        <name>ATP</name>
        <dbReference type="ChEBI" id="CHEBI:30616"/>
    </ligand>
</feature>
<feature type="binding site" evidence="1">
    <location>
        <position position="116"/>
    </location>
    <ligand>
        <name>CTP</name>
        <dbReference type="ChEBI" id="CHEBI:37563"/>
    </ligand>
</feature>
<feature type="binding site" evidence="1">
    <location>
        <position position="159"/>
    </location>
    <ligand>
        <name>ATP</name>
        <dbReference type="ChEBI" id="CHEBI:30616"/>
    </ligand>
</feature>
<feature type="binding site" evidence="1">
    <location>
        <position position="159"/>
    </location>
    <ligand>
        <name>CTP</name>
        <dbReference type="ChEBI" id="CHEBI:37563"/>
    </ligand>
</feature>
<feature type="binding site" evidence="1">
    <location>
        <position position="162"/>
    </location>
    <ligand>
        <name>ATP</name>
        <dbReference type="ChEBI" id="CHEBI:30616"/>
    </ligand>
</feature>
<feature type="binding site" evidence="1">
    <location>
        <position position="162"/>
    </location>
    <ligand>
        <name>CTP</name>
        <dbReference type="ChEBI" id="CHEBI:37563"/>
    </ligand>
</feature>
<feature type="binding site" evidence="1">
    <location>
        <position position="165"/>
    </location>
    <ligand>
        <name>ATP</name>
        <dbReference type="ChEBI" id="CHEBI:30616"/>
    </ligand>
</feature>
<feature type="binding site" evidence="1">
    <location>
        <position position="165"/>
    </location>
    <ligand>
        <name>CTP</name>
        <dbReference type="ChEBI" id="CHEBI:37563"/>
    </ligand>
</feature>
<feature type="binding site" evidence="1">
    <location>
        <position position="168"/>
    </location>
    <ligand>
        <name>ATP</name>
        <dbReference type="ChEBI" id="CHEBI:30616"/>
    </ligand>
</feature>
<feature type="binding site" evidence="1">
    <location>
        <position position="168"/>
    </location>
    <ligand>
        <name>CTP</name>
        <dbReference type="ChEBI" id="CHEBI:37563"/>
    </ligand>
</feature>
<gene>
    <name evidence="1" type="primary">cca</name>
    <name type="ordered locus">M28_Spy0653</name>
</gene>
<sequence>MKLMTMPSEFQKALPILTKIKEAGYEAYFVGGSVRDVLLERPIHDVDIATSSYPEETKAIFNRTVDVGIEHGTVLVLENGGEYEITTFRTEDVYVDYRRPSQVSFVRSLEEDLKRRDFTVNALALDENGQVIDKFRGLIDLEQKRLRAVGKAEERFEEDALRIMRGFRFAASLDFDIEAATFEAMRSHSPLLEKISVERSFTEFDKLLMAPHWRKGISAMIACQAYDYLPGLKQQEAGLNHLIVSLKDNFTFSDHHQAWAYVMISLAIEDPKSFLKAWKTSNDFQRYVTKLIALYRIRQERSFEKLDIYQYGKEMASLVEGLRKAQSLSVDMDHIEALDQALAIHNKYDIVLNGSHLIKDFGMKPGPQLGLMLEKVELAIVEGRLDNDFTTIEAFVREELAT</sequence>